<sequence>MTKSELIERLATQQSHIPAKAVEDAVKEMLEHMASTLAQGERIEIRGFGSFSLHYRAPRTGRNPKTGDKVELEGKYVPHFKPGKELRDRANIYG</sequence>
<reference key="1">
    <citation type="journal article" date="2011" name="J. Bacteriol.">
        <title>Comparative genomics of 28 Salmonella enterica isolates: evidence for CRISPR-mediated adaptive sublineage evolution.</title>
        <authorList>
            <person name="Fricke W.F."/>
            <person name="Mammel M.K."/>
            <person name="McDermott P.F."/>
            <person name="Tartera C."/>
            <person name="White D.G."/>
            <person name="Leclerc J.E."/>
            <person name="Ravel J."/>
            <person name="Cebula T.A."/>
        </authorList>
    </citation>
    <scope>NUCLEOTIDE SEQUENCE [LARGE SCALE GENOMIC DNA]</scope>
    <source>
        <strain>CT_02021853</strain>
    </source>
</reference>
<name>IHFB_SALDC</name>
<feature type="chain" id="PRO_1000122236" description="Integration host factor subunit beta">
    <location>
        <begin position="1"/>
        <end position="94"/>
    </location>
</feature>
<keyword id="KW-0233">DNA recombination</keyword>
<keyword id="KW-0238">DNA-binding</keyword>
<keyword id="KW-0804">Transcription</keyword>
<keyword id="KW-0805">Transcription regulation</keyword>
<keyword id="KW-0810">Translation regulation</keyword>
<accession>B5FQ55</accession>
<gene>
    <name evidence="1" type="primary">ihfB</name>
    <name evidence="1" type="synonym">himD</name>
    <name type="ordered locus">SeD_A1047</name>
</gene>
<dbReference type="EMBL" id="CP001144">
    <property type="protein sequence ID" value="ACH75657.1"/>
    <property type="molecule type" value="Genomic_DNA"/>
</dbReference>
<dbReference type="RefSeq" id="WP_000167332.1">
    <property type="nucleotide sequence ID" value="NC_011205.1"/>
</dbReference>
<dbReference type="SMR" id="B5FQ55"/>
<dbReference type="GeneID" id="84237116"/>
<dbReference type="KEGG" id="sed:SeD_A1047"/>
<dbReference type="HOGENOM" id="CLU_105066_2_0_6"/>
<dbReference type="Proteomes" id="UP000008322">
    <property type="component" value="Chromosome"/>
</dbReference>
<dbReference type="GO" id="GO:0005694">
    <property type="term" value="C:chromosome"/>
    <property type="evidence" value="ECO:0007669"/>
    <property type="project" value="InterPro"/>
</dbReference>
<dbReference type="GO" id="GO:0005829">
    <property type="term" value="C:cytosol"/>
    <property type="evidence" value="ECO:0007669"/>
    <property type="project" value="TreeGrafter"/>
</dbReference>
<dbReference type="GO" id="GO:0003677">
    <property type="term" value="F:DNA binding"/>
    <property type="evidence" value="ECO:0007669"/>
    <property type="project" value="UniProtKB-UniRule"/>
</dbReference>
<dbReference type="GO" id="GO:0030527">
    <property type="term" value="F:structural constituent of chromatin"/>
    <property type="evidence" value="ECO:0007669"/>
    <property type="project" value="InterPro"/>
</dbReference>
<dbReference type="GO" id="GO:0006310">
    <property type="term" value="P:DNA recombination"/>
    <property type="evidence" value="ECO:0007669"/>
    <property type="project" value="UniProtKB-UniRule"/>
</dbReference>
<dbReference type="GO" id="GO:0006355">
    <property type="term" value="P:regulation of DNA-templated transcription"/>
    <property type="evidence" value="ECO:0007669"/>
    <property type="project" value="UniProtKB-UniRule"/>
</dbReference>
<dbReference type="GO" id="GO:0006417">
    <property type="term" value="P:regulation of translation"/>
    <property type="evidence" value="ECO:0007669"/>
    <property type="project" value="UniProtKB-UniRule"/>
</dbReference>
<dbReference type="CDD" id="cd13836">
    <property type="entry name" value="IHF_B"/>
    <property type="match status" value="1"/>
</dbReference>
<dbReference type="FunFam" id="4.10.520.10:FF:000003">
    <property type="entry name" value="Integration host factor subunit beta"/>
    <property type="match status" value="1"/>
</dbReference>
<dbReference type="Gene3D" id="4.10.520.10">
    <property type="entry name" value="IHF-like DNA-binding proteins"/>
    <property type="match status" value="1"/>
</dbReference>
<dbReference type="HAMAP" id="MF_00381">
    <property type="entry name" value="IHF_beta"/>
    <property type="match status" value="1"/>
</dbReference>
<dbReference type="InterPro" id="IPR000119">
    <property type="entry name" value="Hist_DNA-bd"/>
</dbReference>
<dbReference type="InterPro" id="IPR020816">
    <property type="entry name" value="Histone-like_DNA-bd_CS"/>
</dbReference>
<dbReference type="InterPro" id="IPR010992">
    <property type="entry name" value="IHF-like_DNA-bd_dom_sf"/>
</dbReference>
<dbReference type="InterPro" id="IPR005685">
    <property type="entry name" value="IHF_beta"/>
</dbReference>
<dbReference type="NCBIfam" id="TIGR00988">
    <property type="entry name" value="hip"/>
    <property type="match status" value="1"/>
</dbReference>
<dbReference type="NCBIfam" id="NF001222">
    <property type="entry name" value="PRK00199.1"/>
    <property type="match status" value="1"/>
</dbReference>
<dbReference type="PANTHER" id="PTHR33175">
    <property type="entry name" value="DNA-BINDING PROTEIN HU"/>
    <property type="match status" value="1"/>
</dbReference>
<dbReference type="PANTHER" id="PTHR33175:SF5">
    <property type="entry name" value="INTEGRATION HOST FACTOR SUBUNIT BETA"/>
    <property type="match status" value="1"/>
</dbReference>
<dbReference type="Pfam" id="PF00216">
    <property type="entry name" value="Bac_DNA_binding"/>
    <property type="match status" value="1"/>
</dbReference>
<dbReference type="PRINTS" id="PR01727">
    <property type="entry name" value="DNABINDINGHU"/>
</dbReference>
<dbReference type="SMART" id="SM00411">
    <property type="entry name" value="BHL"/>
    <property type="match status" value="1"/>
</dbReference>
<dbReference type="SUPFAM" id="SSF47729">
    <property type="entry name" value="IHF-like DNA-binding proteins"/>
    <property type="match status" value="1"/>
</dbReference>
<dbReference type="PROSITE" id="PS00045">
    <property type="entry name" value="HISTONE_LIKE"/>
    <property type="match status" value="1"/>
</dbReference>
<comment type="function">
    <text evidence="1">This protein is one of the two subunits of integration host factor, a specific DNA-binding protein that functions in genetic recombination as well as in transcriptional and translational control.</text>
</comment>
<comment type="subunit">
    <text evidence="1">Heterodimer of an alpha and a beta chain.</text>
</comment>
<comment type="similarity">
    <text evidence="1">Belongs to the bacterial histone-like protein family.</text>
</comment>
<organism>
    <name type="scientific">Salmonella dublin (strain CT_02021853)</name>
    <dbReference type="NCBI Taxonomy" id="439851"/>
    <lineage>
        <taxon>Bacteria</taxon>
        <taxon>Pseudomonadati</taxon>
        <taxon>Pseudomonadota</taxon>
        <taxon>Gammaproteobacteria</taxon>
        <taxon>Enterobacterales</taxon>
        <taxon>Enterobacteriaceae</taxon>
        <taxon>Salmonella</taxon>
    </lineage>
</organism>
<protein>
    <recommendedName>
        <fullName evidence="1">Integration host factor subunit beta</fullName>
        <shortName evidence="1">IHF-beta</shortName>
    </recommendedName>
</protein>
<proteinExistence type="inferred from homology"/>
<evidence type="ECO:0000255" key="1">
    <source>
        <dbReference type="HAMAP-Rule" id="MF_00381"/>
    </source>
</evidence>